<organism>
    <name type="scientific">Staphylococcus aureus (strain MSSA476)</name>
    <dbReference type="NCBI Taxonomy" id="282459"/>
    <lineage>
        <taxon>Bacteria</taxon>
        <taxon>Bacillati</taxon>
        <taxon>Bacillota</taxon>
        <taxon>Bacilli</taxon>
        <taxon>Bacillales</taxon>
        <taxon>Staphylococcaceae</taxon>
        <taxon>Staphylococcus</taxon>
    </lineage>
</organism>
<sequence length="102" mass="11333">MFAIIETGGKQIKVEEGQEIFVEKLDVNEGDTFTFDKVLFVGGDSVKVGAPTVEGATVTATVNKQGRGKKITVFTYKRRKNSKRKKGHRQPYTKLTIDKINA</sequence>
<gene>
    <name evidence="1" type="primary">rplU</name>
    <name type="ordered locus">SAS1583</name>
</gene>
<comment type="function">
    <text evidence="1">This protein binds to 23S rRNA in the presence of protein L20.</text>
</comment>
<comment type="subunit">
    <text evidence="1">Part of the 50S ribosomal subunit. Contacts protein L20.</text>
</comment>
<comment type="similarity">
    <text evidence="1">Belongs to the bacterial ribosomal protein bL21 family.</text>
</comment>
<evidence type="ECO:0000255" key="1">
    <source>
        <dbReference type="HAMAP-Rule" id="MF_01363"/>
    </source>
</evidence>
<evidence type="ECO:0000256" key="2">
    <source>
        <dbReference type="SAM" id="MobiDB-lite"/>
    </source>
</evidence>
<evidence type="ECO:0000305" key="3"/>
<proteinExistence type="inferred from homology"/>
<reference key="1">
    <citation type="journal article" date="2004" name="Proc. Natl. Acad. Sci. U.S.A.">
        <title>Complete genomes of two clinical Staphylococcus aureus strains: evidence for the rapid evolution of virulence and drug resistance.</title>
        <authorList>
            <person name="Holden M.T.G."/>
            <person name="Feil E.J."/>
            <person name="Lindsay J.A."/>
            <person name="Peacock S.J."/>
            <person name="Day N.P.J."/>
            <person name="Enright M.C."/>
            <person name="Foster T.J."/>
            <person name="Moore C.E."/>
            <person name="Hurst L."/>
            <person name="Atkin R."/>
            <person name="Barron A."/>
            <person name="Bason N."/>
            <person name="Bentley S.D."/>
            <person name="Chillingworth C."/>
            <person name="Chillingworth T."/>
            <person name="Churcher C."/>
            <person name="Clark L."/>
            <person name="Corton C."/>
            <person name="Cronin A."/>
            <person name="Doggett J."/>
            <person name="Dowd L."/>
            <person name="Feltwell T."/>
            <person name="Hance Z."/>
            <person name="Harris B."/>
            <person name="Hauser H."/>
            <person name="Holroyd S."/>
            <person name="Jagels K."/>
            <person name="James K.D."/>
            <person name="Lennard N."/>
            <person name="Line A."/>
            <person name="Mayes R."/>
            <person name="Moule S."/>
            <person name="Mungall K."/>
            <person name="Ormond D."/>
            <person name="Quail M.A."/>
            <person name="Rabbinowitsch E."/>
            <person name="Rutherford K.M."/>
            <person name="Sanders M."/>
            <person name="Sharp S."/>
            <person name="Simmonds M."/>
            <person name="Stevens K."/>
            <person name="Whitehead S."/>
            <person name="Barrell B.G."/>
            <person name="Spratt B.G."/>
            <person name="Parkhill J."/>
        </authorList>
    </citation>
    <scope>NUCLEOTIDE SEQUENCE [LARGE SCALE GENOMIC DNA]</scope>
    <source>
        <strain>MSSA476</strain>
    </source>
</reference>
<keyword id="KW-0687">Ribonucleoprotein</keyword>
<keyword id="KW-0689">Ribosomal protein</keyword>
<keyword id="KW-0694">RNA-binding</keyword>
<keyword id="KW-0699">rRNA-binding</keyword>
<name>RL21_STAAS</name>
<accession>Q6G8S2</accession>
<protein>
    <recommendedName>
        <fullName evidence="1">Large ribosomal subunit protein bL21</fullName>
    </recommendedName>
    <alternativeName>
        <fullName evidence="3">50S ribosomal protein L21</fullName>
    </alternativeName>
</protein>
<dbReference type="EMBL" id="BX571857">
    <property type="protein sequence ID" value="CAG43384.1"/>
    <property type="molecule type" value="Genomic_DNA"/>
</dbReference>
<dbReference type="RefSeq" id="WP_000457386.1">
    <property type="nucleotide sequence ID" value="NC_002953.3"/>
</dbReference>
<dbReference type="SMR" id="Q6G8S2"/>
<dbReference type="GeneID" id="66839833"/>
<dbReference type="KEGG" id="sas:SAS1583"/>
<dbReference type="HOGENOM" id="CLU_061463_3_2_9"/>
<dbReference type="GO" id="GO:0005737">
    <property type="term" value="C:cytoplasm"/>
    <property type="evidence" value="ECO:0007669"/>
    <property type="project" value="UniProtKB-ARBA"/>
</dbReference>
<dbReference type="GO" id="GO:1990904">
    <property type="term" value="C:ribonucleoprotein complex"/>
    <property type="evidence" value="ECO:0007669"/>
    <property type="project" value="UniProtKB-KW"/>
</dbReference>
<dbReference type="GO" id="GO:0005840">
    <property type="term" value="C:ribosome"/>
    <property type="evidence" value="ECO:0007669"/>
    <property type="project" value="UniProtKB-KW"/>
</dbReference>
<dbReference type="GO" id="GO:0019843">
    <property type="term" value="F:rRNA binding"/>
    <property type="evidence" value="ECO:0007669"/>
    <property type="project" value="UniProtKB-UniRule"/>
</dbReference>
<dbReference type="GO" id="GO:0003735">
    <property type="term" value="F:structural constituent of ribosome"/>
    <property type="evidence" value="ECO:0007669"/>
    <property type="project" value="InterPro"/>
</dbReference>
<dbReference type="GO" id="GO:0006412">
    <property type="term" value="P:translation"/>
    <property type="evidence" value="ECO:0007669"/>
    <property type="project" value="UniProtKB-UniRule"/>
</dbReference>
<dbReference type="HAMAP" id="MF_01363">
    <property type="entry name" value="Ribosomal_bL21"/>
    <property type="match status" value="1"/>
</dbReference>
<dbReference type="InterPro" id="IPR028909">
    <property type="entry name" value="bL21-like"/>
</dbReference>
<dbReference type="InterPro" id="IPR036164">
    <property type="entry name" value="bL21-like_sf"/>
</dbReference>
<dbReference type="InterPro" id="IPR001787">
    <property type="entry name" value="Ribosomal_bL21"/>
</dbReference>
<dbReference type="NCBIfam" id="TIGR00061">
    <property type="entry name" value="L21"/>
    <property type="match status" value="1"/>
</dbReference>
<dbReference type="PANTHER" id="PTHR21349">
    <property type="entry name" value="50S RIBOSOMAL PROTEIN L21"/>
    <property type="match status" value="1"/>
</dbReference>
<dbReference type="PANTHER" id="PTHR21349:SF0">
    <property type="entry name" value="LARGE RIBOSOMAL SUBUNIT PROTEIN BL21M"/>
    <property type="match status" value="1"/>
</dbReference>
<dbReference type="Pfam" id="PF00829">
    <property type="entry name" value="Ribosomal_L21p"/>
    <property type="match status" value="1"/>
</dbReference>
<dbReference type="SUPFAM" id="SSF141091">
    <property type="entry name" value="L21p-like"/>
    <property type="match status" value="1"/>
</dbReference>
<feature type="chain" id="PRO_0000224935" description="Large ribosomal subunit protein bL21">
    <location>
        <begin position="1"/>
        <end position="102"/>
    </location>
</feature>
<feature type="region of interest" description="Disordered" evidence="2">
    <location>
        <begin position="80"/>
        <end position="102"/>
    </location>
</feature>
<feature type="compositionally biased region" description="Basic residues" evidence="2">
    <location>
        <begin position="80"/>
        <end position="91"/>
    </location>
</feature>